<protein>
    <recommendedName>
        <fullName evidence="1">Protoheme IX farnesyltransferase</fullName>
        <ecNumber evidence="1">2.5.1.141</ecNumber>
    </recommendedName>
    <alternativeName>
        <fullName evidence="1">Heme B farnesyltransferase</fullName>
    </alternativeName>
    <alternativeName>
        <fullName evidence="1">Heme O synthase</fullName>
    </alternativeName>
</protein>
<name>COXX_PROM3</name>
<reference key="1">
    <citation type="journal article" date="2007" name="PLoS Genet.">
        <title>Patterns and implications of gene gain and loss in the evolution of Prochlorococcus.</title>
        <authorList>
            <person name="Kettler G.C."/>
            <person name="Martiny A.C."/>
            <person name="Huang K."/>
            <person name="Zucker J."/>
            <person name="Coleman M.L."/>
            <person name="Rodrigue S."/>
            <person name="Chen F."/>
            <person name="Lapidus A."/>
            <person name="Ferriera S."/>
            <person name="Johnson J."/>
            <person name="Steglich C."/>
            <person name="Church G.M."/>
            <person name="Richardson P."/>
            <person name="Chisholm S.W."/>
        </authorList>
    </citation>
    <scope>NUCLEOTIDE SEQUENCE [LARGE SCALE GENOMIC DNA]</scope>
    <source>
        <strain>MIT 9303</strain>
    </source>
</reference>
<feature type="chain" id="PRO_0000327116" description="Protoheme IX farnesyltransferase">
    <location>
        <begin position="1"/>
        <end position="333"/>
    </location>
</feature>
<feature type="transmembrane region" description="Helical" evidence="1">
    <location>
        <begin position="63"/>
        <end position="83"/>
    </location>
</feature>
<feature type="transmembrane region" description="Helical" evidence="1">
    <location>
        <begin position="109"/>
        <end position="129"/>
    </location>
</feature>
<feature type="transmembrane region" description="Helical" evidence="1">
    <location>
        <begin position="132"/>
        <end position="152"/>
    </location>
</feature>
<feature type="transmembrane region" description="Helical" evidence="1">
    <location>
        <begin position="160"/>
        <end position="180"/>
    </location>
</feature>
<feature type="transmembrane region" description="Helical" evidence="1">
    <location>
        <begin position="188"/>
        <end position="208"/>
    </location>
</feature>
<feature type="transmembrane region" description="Helical" evidence="1">
    <location>
        <begin position="245"/>
        <end position="265"/>
    </location>
</feature>
<feature type="transmembrane region" description="Helical" evidence="1">
    <location>
        <begin position="292"/>
        <end position="312"/>
    </location>
</feature>
<gene>
    <name evidence="1" type="primary">ctaB</name>
    <name type="ordered locus">P9303_06451</name>
</gene>
<keyword id="KW-0997">Cell inner membrane</keyword>
<keyword id="KW-1003">Cell membrane</keyword>
<keyword id="KW-0350">Heme biosynthesis</keyword>
<keyword id="KW-0472">Membrane</keyword>
<keyword id="KW-0808">Transferase</keyword>
<keyword id="KW-0812">Transmembrane</keyword>
<keyword id="KW-1133">Transmembrane helix</keyword>
<evidence type="ECO:0000255" key="1">
    <source>
        <dbReference type="HAMAP-Rule" id="MF_00154"/>
    </source>
</evidence>
<accession>A2C7D7</accession>
<comment type="function">
    <text evidence="1">Converts heme B (protoheme IX) to heme O by substitution of the vinyl group on carbon 2 of heme B porphyrin ring with a hydroxyethyl farnesyl side group.</text>
</comment>
<comment type="catalytic activity">
    <reaction evidence="1">
        <text>heme b + (2E,6E)-farnesyl diphosphate + H2O = Fe(II)-heme o + diphosphate</text>
        <dbReference type="Rhea" id="RHEA:28070"/>
        <dbReference type="ChEBI" id="CHEBI:15377"/>
        <dbReference type="ChEBI" id="CHEBI:33019"/>
        <dbReference type="ChEBI" id="CHEBI:60344"/>
        <dbReference type="ChEBI" id="CHEBI:60530"/>
        <dbReference type="ChEBI" id="CHEBI:175763"/>
        <dbReference type="EC" id="2.5.1.141"/>
    </reaction>
</comment>
<comment type="pathway">
    <text evidence="1">Porphyrin-containing compound metabolism; heme O biosynthesis; heme O from protoheme: step 1/1.</text>
</comment>
<comment type="subcellular location">
    <subcellularLocation>
        <location evidence="1">Cell inner membrane</location>
        <topology evidence="1">Multi-pass membrane protein</topology>
    </subcellularLocation>
</comment>
<comment type="miscellaneous">
    <text evidence="1">Carbon 2 of the heme B porphyrin ring is defined according to the Fischer nomenclature.</text>
</comment>
<comment type="similarity">
    <text evidence="1">Belongs to the UbiA prenyltransferase family. Protoheme IX farnesyltransferase subfamily.</text>
</comment>
<dbReference type="EC" id="2.5.1.141" evidence="1"/>
<dbReference type="EMBL" id="CP000554">
    <property type="protein sequence ID" value="ABM77397.1"/>
    <property type="molecule type" value="Genomic_DNA"/>
</dbReference>
<dbReference type="RefSeq" id="WP_011825316.1">
    <property type="nucleotide sequence ID" value="NC_008820.1"/>
</dbReference>
<dbReference type="SMR" id="A2C7D7"/>
<dbReference type="STRING" id="59922.P9303_06451"/>
<dbReference type="KEGG" id="pmf:P9303_06451"/>
<dbReference type="HOGENOM" id="CLU_029631_0_2_3"/>
<dbReference type="BioCyc" id="PMAR59922:G1G80-594-MONOMER"/>
<dbReference type="UniPathway" id="UPA00834">
    <property type="reaction ID" value="UER00712"/>
</dbReference>
<dbReference type="Proteomes" id="UP000002274">
    <property type="component" value="Chromosome"/>
</dbReference>
<dbReference type="GO" id="GO:0005886">
    <property type="term" value="C:plasma membrane"/>
    <property type="evidence" value="ECO:0007669"/>
    <property type="project" value="UniProtKB-SubCell"/>
</dbReference>
<dbReference type="GO" id="GO:0008495">
    <property type="term" value="F:protoheme IX farnesyltransferase activity"/>
    <property type="evidence" value="ECO:0007669"/>
    <property type="project" value="UniProtKB-UniRule"/>
</dbReference>
<dbReference type="GO" id="GO:0048034">
    <property type="term" value="P:heme O biosynthetic process"/>
    <property type="evidence" value="ECO:0007669"/>
    <property type="project" value="UniProtKB-UniRule"/>
</dbReference>
<dbReference type="CDD" id="cd13957">
    <property type="entry name" value="PT_UbiA_Cox10"/>
    <property type="match status" value="1"/>
</dbReference>
<dbReference type="Gene3D" id="1.10.357.140">
    <property type="entry name" value="UbiA prenyltransferase"/>
    <property type="match status" value="1"/>
</dbReference>
<dbReference type="HAMAP" id="MF_00154">
    <property type="entry name" value="CyoE_CtaB"/>
    <property type="match status" value="1"/>
</dbReference>
<dbReference type="InterPro" id="IPR006369">
    <property type="entry name" value="Protohaem_IX_farnesylTrfase"/>
</dbReference>
<dbReference type="InterPro" id="IPR000537">
    <property type="entry name" value="UbiA_prenyltransferase"/>
</dbReference>
<dbReference type="InterPro" id="IPR030470">
    <property type="entry name" value="UbiA_prenylTrfase_CS"/>
</dbReference>
<dbReference type="InterPro" id="IPR044878">
    <property type="entry name" value="UbiA_sf"/>
</dbReference>
<dbReference type="NCBIfam" id="TIGR01473">
    <property type="entry name" value="cyoE_ctaB"/>
    <property type="match status" value="1"/>
</dbReference>
<dbReference type="NCBIfam" id="NF003349">
    <property type="entry name" value="PRK04375.1-2"/>
    <property type="match status" value="1"/>
</dbReference>
<dbReference type="PANTHER" id="PTHR43448:SF7">
    <property type="entry name" value="4-HYDROXYBENZOATE SOLANESYLTRANSFERASE"/>
    <property type="match status" value="1"/>
</dbReference>
<dbReference type="PANTHER" id="PTHR43448">
    <property type="entry name" value="PROTOHEME IX FARNESYLTRANSFERASE, MITOCHONDRIAL"/>
    <property type="match status" value="1"/>
</dbReference>
<dbReference type="Pfam" id="PF01040">
    <property type="entry name" value="UbiA"/>
    <property type="match status" value="1"/>
</dbReference>
<dbReference type="PROSITE" id="PS00943">
    <property type="entry name" value="UBIA"/>
    <property type="match status" value="1"/>
</dbReference>
<organism>
    <name type="scientific">Prochlorococcus marinus (strain MIT 9303)</name>
    <dbReference type="NCBI Taxonomy" id="59922"/>
    <lineage>
        <taxon>Bacteria</taxon>
        <taxon>Bacillati</taxon>
        <taxon>Cyanobacteriota</taxon>
        <taxon>Cyanophyceae</taxon>
        <taxon>Synechococcales</taxon>
        <taxon>Prochlorococcaceae</taxon>
        <taxon>Prochlorococcus</taxon>
    </lineage>
</organism>
<sequence length="333" mass="35315">MVSSTPEMLQGGLTREQIVPSRKRIKLPAWLEIAKPRLIPLLLATTLGGMALSEGWPLPSLRLACTLGGGALAAAAAGVLNCIWEQDLDGRMQRTSGRALPSGRLSPTAAFIGAISCTLAAAALLVSGVNCLAAGLSLLGLCSYVLLYTAILKPRTPQNIVIGGVAGAIPPLVGAAAASGHVGLSGWWLFALVMLWTPAHFWALALLLRDDYRAVGIPMLPVVKGPVVTVRAISRYGWATVLLSGFGVWALPEGGLLYGLLLIPFNARLLQMVHQLGAAPENVDRAKGLFRWSIFYMFGICLLLVVSRLPMAANFDLQAWSLLQQMASSGQFI</sequence>
<proteinExistence type="inferred from homology"/>